<protein>
    <recommendedName>
        <fullName evidence="1">Thymidine kinase</fullName>
        <ecNumber evidence="1">2.7.1.21</ecNumber>
    </recommendedName>
</protein>
<organism>
    <name type="scientific">Streptococcus pyogenes serotype M3 (strain ATCC BAA-595 / MGAS315)</name>
    <dbReference type="NCBI Taxonomy" id="198466"/>
    <lineage>
        <taxon>Bacteria</taxon>
        <taxon>Bacillati</taxon>
        <taxon>Bacillota</taxon>
        <taxon>Bacilli</taxon>
        <taxon>Lactobacillales</taxon>
        <taxon>Streptococcaceae</taxon>
        <taxon>Streptococcus</taxon>
    </lineage>
</organism>
<reference key="1">
    <citation type="journal article" date="2002" name="Proc. Natl. Acad. Sci. U.S.A.">
        <title>Genome sequence of a serotype M3 strain of group A Streptococcus: phage-encoded toxins, the high-virulence phenotype, and clone emergence.</title>
        <authorList>
            <person name="Beres S.B."/>
            <person name="Sylva G.L."/>
            <person name="Barbian K.D."/>
            <person name="Lei B."/>
            <person name="Hoff J.S."/>
            <person name="Mammarella N.D."/>
            <person name="Liu M.-Y."/>
            <person name="Smoot J.C."/>
            <person name="Porcella S.F."/>
            <person name="Parkins L.D."/>
            <person name="Campbell D.S."/>
            <person name="Smith T.M."/>
            <person name="McCormick J.K."/>
            <person name="Leung D.Y.M."/>
            <person name="Schlievert P.M."/>
            <person name="Musser J.M."/>
        </authorList>
    </citation>
    <scope>NUCLEOTIDE SEQUENCE [LARGE SCALE GENOMIC DNA]</scope>
    <source>
        <strain>ATCC BAA-595 / MGAS315</strain>
    </source>
</reference>
<proteinExistence type="inferred from homology"/>
<keyword id="KW-0067">ATP-binding</keyword>
<keyword id="KW-0963">Cytoplasm</keyword>
<keyword id="KW-0237">DNA synthesis</keyword>
<keyword id="KW-0418">Kinase</keyword>
<keyword id="KW-0479">Metal-binding</keyword>
<keyword id="KW-0547">Nucleotide-binding</keyword>
<keyword id="KW-0808">Transferase</keyword>
<keyword id="KW-0862">Zinc</keyword>
<sequence>MAQLYYKYGTMNSGKTIEILKVAHNYEEQGKPVVIMTSALDTRDGFGIVSSRIGMRREAIPISNDMDIFTFIAQLEEKPYCVLIDESQFLSKQNVYDLARVVDELNVPVMAFGLKNDFQNNLFEGSKHLLLLADKIDEIKTICQYCSKKATMVLRIENGKPVYEGDQIQIGGNETYIPVCRKHYFNPEI</sequence>
<comment type="catalytic activity">
    <reaction evidence="1">
        <text>thymidine + ATP = dTMP + ADP + H(+)</text>
        <dbReference type="Rhea" id="RHEA:19129"/>
        <dbReference type="ChEBI" id="CHEBI:15378"/>
        <dbReference type="ChEBI" id="CHEBI:17748"/>
        <dbReference type="ChEBI" id="CHEBI:30616"/>
        <dbReference type="ChEBI" id="CHEBI:63528"/>
        <dbReference type="ChEBI" id="CHEBI:456216"/>
        <dbReference type="EC" id="2.7.1.21"/>
    </reaction>
</comment>
<comment type="subunit">
    <text evidence="1">Homotetramer.</text>
</comment>
<comment type="subcellular location">
    <subcellularLocation>
        <location evidence="1">Cytoplasm</location>
    </subcellularLocation>
</comment>
<comment type="similarity">
    <text evidence="1">Belongs to the thymidine kinase family.</text>
</comment>
<comment type="sequence caution" evidence="2">
    <conflict type="erroneous initiation">
        <sequence resource="EMBL-CDS" id="AAM79405"/>
    </conflict>
</comment>
<evidence type="ECO:0000255" key="1">
    <source>
        <dbReference type="HAMAP-Rule" id="MF_00124"/>
    </source>
</evidence>
<evidence type="ECO:0000305" key="2"/>
<name>KITH_STRP3</name>
<feature type="chain" id="PRO_0000175035" description="Thymidine kinase">
    <location>
        <begin position="1"/>
        <end position="189"/>
    </location>
</feature>
<feature type="active site" description="Proton acceptor" evidence="1">
    <location>
        <position position="86"/>
    </location>
</feature>
<feature type="binding site" evidence="1">
    <location>
        <begin position="9"/>
        <end position="16"/>
    </location>
    <ligand>
        <name>ATP</name>
        <dbReference type="ChEBI" id="CHEBI:30616"/>
    </ligand>
</feature>
<feature type="binding site" evidence="1">
    <location>
        <begin position="85"/>
        <end position="88"/>
    </location>
    <ligand>
        <name>ATP</name>
        <dbReference type="ChEBI" id="CHEBI:30616"/>
    </ligand>
</feature>
<feature type="binding site" evidence="1">
    <location>
        <position position="143"/>
    </location>
    <ligand>
        <name>Zn(2+)</name>
        <dbReference type="ChEBI" id="CHEBI:29105"/>
    </ligand>
</feature>
<feature type="binding site" evidence="1">
    <location>
        <position position="146"/>
    </location>
    <ligand>
        <name>Zn(2+)</name>
        <dbReference type="ChEBI" id="CHEBI:29105"/>
    </ligand>
</feature>
<feature type="binding site" evidence="1">
    <location>
        <position position="180"/>
    </location>
    <ligand>
        <name>Zn(2+)</name>
        <dbReference type="ChEBI" id="CHEBI:29105"/>
    </ligand>
</feature>
<feature type="binding site" evidence="1">
    <location>
        <position position="183"/>
    </location>
    <ligand>
        <name>Zn(2+)</name>
        <dbReference type="ChEBI" id="CHEBI:29105"/>
    </ligand>
</feature>
<dbReference type="EC" id="2.7.1.21" evidence="1"/>
<dbReference type="EMBL" id="AE014074">
    <property type="protein sequence ID" value="AAM79405.1"/>
    <property type="status" value="ALT_INIT"/>
    <property type="molecule type" value="Genomic_DNA"/>
</dbReference>
<dbReference type="RefSeq" id="WP_011106764.1">
    <property type="nucleotide sequence ID" value="NC_004070.1"/>
</dbReference>
<dbReference type="SMR" id="P0DB96"/>
<dbReference type="KEGG" id="spg:SpyM3_0798"/>
<dbReference type="HOGENOM" id="CLU_064400_2_2_9"/>
<dbReference type="Proteomes" id="UP000000564">
    <property type="component" value="Chromosome"/>
</dbReference>
<dbReference type="GO" id="GO:0005829">
    <property type="term" value="C:cytosol"/>
    <property type="evidence" value="ECO:0007669"/>
    <property type="project" value="TreeGrafter"/>
</dbReference>
<dbReference type="GO" id="GO:0005524">
    <property type="term" value="F:ATP binding"/>
    <property type="evidence" value="ECO:0007669"/>
    <property type="project" value="UniProtKB-UniRule"/>
</dbReference>
<dbReference type="GO" id="GO:0004797">
    <property type="term" value="F:thymidine kinase activity"/>
    <property type="evidence" value="ECO:0007669"/>
    <property type="project" value="UniProtKB-UniRule"/>
</dbReference>
<dbReference type="GO" id="GO:0008270">
    <property type="term" value="F:zinc ion binding"/>
    <property type="evidence" value="ECO:0007669"/>
    <property type="project" value="UniProtKB-UniRule"/>
</dbReference>
<dbReference type="GO" id="GO:0071897">
    <property type="term" value="P:DNA biosynthetic process"/>
    <property type="evidence" value="ECO:0007669"/>
    <property type="project" value="UniProtKB-KW"/>
</dbReference>
<dbReference type="GO" id="GO:0046104">
    <property type="term" value="P:thymidine metabolic process"/>
    <property type="evidence" value="ECO:0007669"/>
    <property type="project" value="TreeGrafter"/>
</dbReference>
<dbReference type="Gene3D" id="3.30.60.20">
    <property type="match status" value="1"/>
</dbReference>
<dbReference type="Gene3D" id="3.40.50.300">
    <property type="entry name" value="P-loop containing nucleotide triphosphate hydrolases"/>
    <property type="match status" value="1"/>
</dbReference>
<dbReference type="HAMAP" id="MF_00124">
    <property type="entry name" value="Thymidine_kinase"/>
    <property type="match status" value="1"/>
</dbReference>
<dbReference type="InterPro" id="IPR027417">
    <property type="entry name" value="P-loop_NTPase"/>
</dbReference>
<dbReference type="InterPro" id="IPR001267">
    <property type="entry name" value="Thymidine_kinase"/>
</dbReference>
<dbReference type="InterPro" id="IPR020633">
    <property type="entry name" value="Thymidine_kinase_CS"/>
</dbReference>
<dbReference type="NCBIfam" id="NF003299">
    <property type="entry name" value="PRK04296.1-4"/>
    <property type="match status" value="1"/>
</dbReference>
<dbReference type="NCBIfam" id="NF003300">
    <property type="entry name" value="PRK04296.1-5"/>
    <property type="match status" value="1"/>
</dbReference>
<dbReference type="PANTHER" id="PTHR11441">
    <property type="entry name" value="THYMIDINE KINASE"/>
    <property type="match status" value="1"/>
</dbReference>
<dbReference type="PANTHER" id="PTHR11441:SF0">
    <property type="entry name" value="THYMIDINE KINASE, CYTOSOLIC"/>
    <property type="match status" value="1"/>
</dbReference>
<dbReference type="Pfam" id="PF00265">
    <property type="entry name" value="TK"/>
    <property type="match status" value="1"/>
</dbReference>
<dbReference type="PIRSF" id="PIRSF035805">
    <property type="entry name" value="TK_cell"/>
    <property type="match status" value="1"/>
</dbReference>
<dbReference type="SUPFAM" id="SSF57716">
    <property type="entry name" value="Glucocorticoid receptor-like (DNA-binding domain)"/>
    <property type="match status" value="1"/>
</dbReference>
<dbReference type="SUPFAM" id="SSF52540">
    <property type="entry name" value="P-loop containing nucleoside triphosphate hydrolases"/>
    <property type="match status" value="1"/>
</dbReference>
<dbReference type="PROSITE" id="PS00603">
    <property type="entry name" value="TK_CELLULAR_TYPE"/>
    <property type="match status" value="1"/>
</dbReference>
<gene>
    <name evidence="1" type="primary">tdk</name>
    <name type="ordered locus">SpyM3_0798</name>
</gene>
<accession>P0DB96</accession>
<accession>Q878R8</accession>
<accession>Q8K7I3</accession>